<reference key="1">
    <citation type="journal article" date="2008" name="Science">
        <title>Genome of an endosymbiont coupling N2 fixation to cellulolysis within RT protist cells in termite gut.</title>
        <authorList>
            <person name="Hongoh Y."/>
            <person name="Sharma V.K."/>
            <person name="Prakash T."/>
            <person name="Noda S."/>
            <person name="Toh H."/>
            <person name="Taylor T.D."/>
            <person name="Kudo T."/>
            <person name="Sakaki Y."/>
            <person name="Toyoda A."/>
            <person name="Hattori M."/>
            <person name="Ohkuma M."/>
        </authorList>
    </citation>
    <scope>NUCLEOTIDE SEQUENCE [LARGE SCALE GENOMIC DNA]</scope>
</reference>
<accession>B6YQN5</accession>
<feature type="chain" id="PRO_1000115827" description="Enolase">
    <location>
        <begin position="1"/>
        <end position="428"/>
    </location>
</feature>
<feature type="active site" description="Proton donor" evidence="1">
    <location>
        <position position="204"/>
    </location>
</feature>
<feature type="active site" description="Proton acceptor" evidence="1">
    <location>
        <position position="340"/>
    </location>
</feature>
<feature type="binding site" evidence="1">
    <location>
        <position position="162"/>
    </location>
    <ligand>
        <name>(2R)-2-phosphoglycerate</name>
        <dbReference type="ChEBI" id="CHEBI:58289"/>
    </ligand>
</feature>
<feature type="binding site" evidence="1">
    <location>
        <position position="241"/>
    </location>
    <ligand>
        <name>Mg(2+)</name>
        <dbReference type="ChEBI" id="CHEBI:18420"/>
    </ligand>
</feature>
<feature type="binding site" evidence="1">
    <location>
        <position position="288"/>
    </location>
    <ligand>
        <name>Mg(2+)</name>
        <dbReference type="ChEBI" id="CHEBI:18420"/>
    </ligand>
</feature>
<feature type="binding site" evidence="1">
    <location>
        <position position="315"/>
    </location>
    <ligand>
        <name>Mg(2+)</name>
        <dbReference type="ChEBI" id="CHEBI:18420"/>
    </ligand>
</feature>
<feature type="binding site" evidence="1">
    <location>
        <position position="340"/>
    </location>
    <ligand>
        <name>(2R)-2-phosphoglycerate</name>
        <dbReference type="ChEBI" id="CHEBI:58289"/>
    </ligand>
</feature>
<feature type="binding site" evidence="1">
    <location>
        <position position="369"/>
    </location>
    <ligand>
        <name>(2R)-2-phosphoglycerate</name>
        <dbReference type="ChEBI" id="CHEBI:58289"/>
    </ligand>
</feature>
<feature type="binding site" evidence="1">
    <location>
        <position position="370"/>
    </location>
    <ligand>
        <name>(2R)-2-phosphoglycerate</name>
        <dbReference type="ChEBI" id="CHEBI:58289"/>
    </ligand>
</feature>
<feature type="binding site" evidence="1">
    <location>
        <position position="391"/>
    </location>
    <ligand>
        <name>(2R)-2-phosphoglycerate</name>
        <dbReference type="ChEBI" id="CHEBI:58289"/>
    </ligand>
</feature>
<protein>
    <recommendedName>
        <fullName evidence="1">Enolase</fullName>
        <ecNumber evidence="1">4.2.1.11</ecNumber>
    </recommendedName>
    <alternativeName>
        <fullName evidence="1">2-phospho-D-glycerate hydro-lyase</fullName>
    </alternativeName>
    <alternativeName>
        <fullName evidence="1">2-phosphoglycerate dehydratase</fullName>
    </alternativeName>
</protein>
<keyword id="KW-0963">Cytoplasm</keyword>
<keyword id="KW-0324">Glycolysis</keyword>
<keyword id="KW-0456">Lyase</keyword>
<keyword id="KW-0460">Magnesium</keyword>
<keyword id="KW-0479">Metal-binding</keyword>
<keyword id="KW-1185">Reference proteome</keyword>
<keyword id="KW-0964">Secreted</keyword>
<proteinExistence type="inferred from homology"/>
<gene>
    <name evidence="1" type="primary">eno</name>
    <name type="ordered locus">CFPG_244</name>
</gene>
<comment type="function">
    <text evidence="1">Catalyzes the reversible conversion of 2-phosphoglycerate (2-PG) into phosphoenolpyruvate (PEP). It is essential for the degradation of carbohydrates via glycolysis.</text>
</comment>
<comment type="catalytic activity">
    <reaction evidence="1">
        <text>(2R)-2-phosphoglycerate = phosphoenolpyruvate + H2O</text>
        <dbReference type="Rhea" id="RHEA:10164"/>
        <dbReference type="ChEBI" id="CHEBI:15377"/>
        <dbReference type="ChEBI" id="CHEBI:58289"/>
        <dbReference type="ChEBI" id="CHEBI:58702"/>
        <dbReference type="EC" id="4.2.1.11"/>
    </reaction>
</comment>
<comment type="cofactor">
    <cofactor evidence="1">
        <name>Mg(2+)</name>
        <dbReference type="ChEBI" id="CHEBI:18420"/>
    </cofactor>
    <text evidence="1">Binds a second Mg(2+) ion via substrate during catalysis.</text>
</comment>
<comment type="pathway">
    <text evidence="1">Carbohydrate degradation; glycolysis; pyruvate from D-glyceraldehyde 3-phosphate: step 4/5.</text>
</comment>
<comment type="subcellular location">
    <subcellularLocation>
        <location evidence="1">Cytoplasm</location>
    </subcellularLocation>
    <subcellularLocation>
        <location evidence="1">Secreted</location>
    </subcellularLocation>
    <subcellularLocation>
        <location evidence="1">Cell surface</location>
    </subcellularLocation>
    <text evidence="1">Fractions of enolase are present in both the cytoplasm and on the cell surface.</text>
</comment>
<comment type="similarity">
    <text evidence="1">Belongs to the enolase family.</text>
</comment>
<name>ENO_AZOPC</name>
<organism>
    <name type="scientific">Azobacteroides pseudotrichonymphae genomovar. CFP2</name>
    <dbReference type="NCBI Taxonomy" id="511995"/>
    <lineage>
        <taxon>Bacteria</taxon>
        <taxon>Pseudomonadati</taxon>
        <taxon>Bacteroidota</taxon>
        <taxon>Bacteroidia</taxon>
        <taxon>Bacteroidales</taxon>
        <taxon>Candidatus Azobacteroides</taxon>
    </lineage>
</organism>
<sequence>MKIVKVIGREILDSRGNPTIEVDVHLESGFIGRASVPSGASTGKNEALELRDGDKQRFLGKGVLKAVSNINKIIAPALLSRNVFDQRGIDKVMLSLDGTSTKSKLGANAILGVSLAVARAAAEYLQIPLYRYIGGVNTYILPIPMMNIINGGSHSDAPIAFQEFMIRPIGASSFREGLRMGVEVFHALKKVLHDRGLSTAVGDEGGFAPTLKGTEDALESIIQAIDNAGYKPVEDITIGLDCASSEFYKNGIYDYTKFEGTIGARRTSIQQVEYLSELVSKYPIDSIEDGMSENDWDGWKLLTSKIGNKVQLVGDDLFVTNVEFLKKGIEQGCANSILVKVNQIGSLTETLDSIEMAHRANYNSVVSHRSGETEDSTIADIAVATNSGQIKTGSLSRSDRMAKYNQLLRIEEELGDKAFYGYKALKMC</sequence>
<evidence type="ECO:0000255" key="1">
    <source>
        <dbReference type="HAMAP-Rule" id="MF_00318"/>
    </source>
</evidence>
<dbReference type="EC" id="4.2.1.11" evidence="1"/>
<dbReference type="EMBL" id="AP010656">
    <property type="protein sequence ID" value="BAG83507.1"/>
    <property type="molecule type" value="Genomic_DNA"/>
</dbReference>
<dbReference type="RefSeq" id="WP_012573268.1">
    <property type="nucleotide sequence ID" value="NC_011565.1"/>
</dbReference>
<dbReference type="SMR" id="B6YQN5"/>
<dbReference type="STRING" id="511995.CFPG_244"/>
<dbReference type="KEGG" id="aps:CFPG_244"/>
<dbReference type="eggNOG" id="COG0148">
    <property type="taxonomic scope" value="Bacteria"/>
</dbReference>
<dbReference type="HOGENOM" id="CLU_031223_2_1_10"/>
<dbReference type="OrthoDB" id="9804716at2"/>
<dbReference type="UniPathway" id="UPA00109">
    <property type="reaction ID" value="UER00187"/>
</dbReference>
<dbReference type="Proteomes" id="UP000000723">
    <property type="component" value="Chromosome"/>
</dbReference>
<dbReference type="GO" id="GO:0009986">
    <property type="term" value="C:cell surface"/>
    <property type="evidence" value="ECO:0007669"/>
    <property type="project" value="UniProtKB-SubCell"/>
</dbReference>
<dbReference type="GO" id="GO:0005576">
    <property type="term" value="C:extracellular region"/>
    <property type="evidence" value="ECO:0007669"/>
    <property type="project" value="UniProtKB-SubCell"/>
</dbReference>
<dbReference type="GO" id="GO:0000015">
    <property type="term" value="C:phosphopyruvate hydratase complex"/>
    <property type="evidence" value="ECO:0007669"/>
    <property type="project" value="InterPro"/>
</dbReference>
<dbReference type="GO" id="GO:0000287">
    <property type="term" value="F:magnesium ion binding"/>
    <property type="evidence" value="ECO:0007669"/>
    <property type="project" value="UniProtKB-UniRule"/>
</dbReference>
<dbReference type="GO" id="GO:0004634">
    <property type="term" value="F:phosphopyruvate hydratase activity"/>
    <property type="evidence" value="ECO:0007669"/>
    <property type="project" value="UniProtKB-UniRule"/>
</dbReference>
<dbReference type="GO" id="GO:0006096">
    <property type="term" value="P:glycolytic process"/>
    <property type="evidence" value="ECO:0007669"/>
    <property type="project" value="UniProtKB-UniRule"/>
</dbReference>
<dbReference type="CDD" id="cd03313">
    <property type="entry name" value="enolase"/>
    <property type="match status" value="1"/>
</dbReference>
<dbReference type="FunFam" id="3.20.20.120:FF:000001">
    <property type="entry name" value="Enolase"/>
    <property type="match status" value="1"/>
</dbReference>
<dbReference type="FunFam" id="3.30.390.10:FF:000001">
    <property type="entry name" value="Enolase"/>
    <property type="match status" value="1"/>
</dbReference>
<dbReference type="Gene3D" id="3.20.20.120">
    <property type="entry name" value="Enolase-like C-terminal domain"/>
    <property type="match status" value="1"/>
</dbReference>
<dbReference type="Gene3D" id="3.30.390.10">
    <property type="entry name" value="Enolase-like, N-terminal domain"/>
    <property type="match status" value="1"/>
</dbReference>
<dbReference type="HAMAP" id="MF_00318">
    <property type="entry name" value="Enolase"/>
    <property type="match status" value="1"/>
</dbReference>
<dbReference type="InterPro" id="IPR000941">
    <property type="entry name" value="Enolase"/>
</dbReference>
<dbReference type="InterPro" id="IPR036849">
    <property type="entry name" value="Enolase-like_C_sf"/>
</dbReference>
<dbReference type="InterPro" id="IPR029017">
    <property type="entry name" value="Enolase-like_N"/>
</dbReference>
<dbReference type="InterPro" id="IPR020810">
    <property type="entry name" value="Enolase_C"/>
</dbReference>
<dbReference type="InterPro" id="IPR020809">
    <property type="entry name" value="Enolase_CS"/>
</dbReference>
<dbReference type="InterPro" id="IPR020811">
    <property type="entry name" value="Enolase_N"/>
</dbReference>
<dbReference type="NCBIfam" id="TIGR01060">
    <property type="entry name" value="eno"/>
    <property type="match status" value="1"/>
</dbReference>
<dbReference type="PANTHER" id="PTHR11902">
    <property type="entry name" value="ENOLASE"/>
    <property type="match status" value="1"/>
</dbReference>
<dbReference type="PANTHER" id="PTHR11902:SF1">
    <property type="entry name" value="ENOLASE"/>
    <property type="match status" value="1"/>
</dbReference>
<dbReference type="Pfam" id="PF00113">
    <property type="entry name" value="Enolase_C"/>
    <property type="match status" value="1"/>
</dbReference>
<dbReference type="Pfam" id="PF03952">
    <property type="entry name" value="Enolase_N"/>
    <property type="match status" value="1"/>
</dbReference>
<dbReference type="PIRSF" id="PIRSF001400">
    <property type="entry name" value="Enolase"/>
    <property type="match status" value="1"/>
</dbReference>
<dbReference type="PRINTS" id="PR00148">
    <property type="entry name" value="ENOLASE"/>
</dbReference>
<dbReference type="SFLD" id="SFLDS00001">
    <property type="entry name" value="Enolase"/>
    <property type="match status" value="1"/>
</dbReference>
<dbReference type="SFLD" id="SFLDF00002">
    <property type="entry name" value="enolase"/>
    <property type="match status" value="1"/>
</dbReference>
<dbReference type="SMART" id="SM01192">
    <property type="entry name" value="Enolase_C"/>
    <property type="match status" value="1"/>
</dbReference>
<dbReference type="SMART" id="SM01193">
    <property type="entry name" value="Enolase_N"/>
    <property type="match status" value="1"/>
</dbReference>
<dbReference type="SUPFAM" id="SSF51604">
    <property type="entry name" value="Enolase C-terminal domain-like"/>
    <property type="match status" value="1"/>
</dbReference>
<dbReference type="SUPFAM" id="SSF54826">
    <property type="entry name" value="Enolase N-terminal domain-like"/>
    <property type="match status" value="1"/>
</dbReference>
<dbReference type="PROSITE" id="PS00164">
    <property type="entry name" value="ENOLASE"/>
    <property type="match status" value="1"/>
</dbReference>